<reference key="1">
    <citation type="journal article" date="1992" name="J. Biol. Chem.">
        <title>Cloning and expression of guanylin. Its existence in various mammalian tissues.</title>
        <authorList>
            <person name="Schulz S."/>
            <person name="Chrisman T.D."/>
            <person name="Garbers D.L."/>
        </authorList>
    </citation>
    <scope>NUCLEOTIDE SEQUENCE [MRNA]</scope>
    <source>
        <tissue>Intestine</tissue>
    </source>
</reference>
<reference key="2">
    <citation type="journal article" date="1992" name="Biochem. Biophys. Res. Commun.">
        <title>Rat guanylin cDNA: characterization of the precursor of an endogenous activator of intestinal guanylate cyclase.</title>
        <authorList>
            <person name="Wiegand R.C."/>
            <person name="Kato J."/>
            <person name="Currie M.G."/>
        </authorList>
    </citation>
    <scope>NUCLEOTIDE SEQUENCE [MRNA]</scope>
</reference>
<reference key="3">
    <citation type="submission" date="1992-08" db="EMBL/GenBank/DDBJ databases">
        <authorList>
            <person name="Maegert H.J."/>
            <person name="Khun M."/>
            <person name="Kruhoffer M."/>
            <person name="Forssmann W.-G."/>
        </authorList>
    </citation>
    <scope>NUCLEOTIDE SEQUENCE [MRNA] OF 101-115</scope>
    <source>
        <strain>Lewis</strain>
        <tissue>Duodenum</tissue>
    </source>
</reference>
<reference key="4">
    <citation type="journal article" date="1992" name="Proc. Natl. Acad. Sci. U.S.A.">
        <title>Guanylin: an endogenous activator of intestinal guanylate cyclase.</title>
        <authorList>
            <person name="Currie M.G."/>
            <person name="Fok K.F."/>
            <person name="Kato J."/>
            <person name="Moore R.J."/>
            <person name="Hamra F.K."/>
            <person name="Duffin K.L."/>
            <person name="Smith C.E."/>
        </authorList>
    </citation>
    <scope>PROTEIN SEQUENCE OF 101-115</scope>
    <source>
        <tissue>Jejunum</tissue>
    </source>
</reference>
<gene>
    <name type="primary">Guca2a</name>
    <name type="synonym">Guca2</name>
</gene>
<evidence type="ECO:0000250" key="1"/>
<evidence type="ECO:0000255" key="2"/>
<evidence type="ECO:0000269" key="3">
    <source>
    </source>
</evidence>
<evidence type="ECO:0000305" key="4"/>
<organism>
    <name type="scientific">Rattus norvegicus</name>
    <name type="common">Rat</name>
    <dbReference type="NCBI Taxonomy" id="10116"/>
    <lineage>
        <taxon>Eukaryota</taxon>
        <taxon>Metazoa</taxon>
        <taxon>Chordata</taxon>
        <taxon>Craniata</taxon>
        <taxon>Vertebrata</taxon>
        <taxon>Euteleostomi</taxon>
        <taxon>Mammalia</taxon>
        <taxon>Eutheria</taxon>
        <taxon>Euarchontoglires</taxon>
        <taxon>Glires</taxon>
        <taxon>Rodentia</taxon>
        <taxon>Myomorpha</taxon>
        <taxon>Muroidea</taxon>
        <taxon>Muridae</taxon>
        <taxon>Murinae</taxon>
        <taxon>Rattus</taxon>
    </lineage>
</organism>
<feature type="signal peptide" evidence="2">
    <location>
        <begin position="1"/>
        <end position="23"/>
    </location>
</feature>
<feature type="propeptide" id="PRO_0000013141" evidence="3">
    <location>
        <begin position="24"/>
        <end position="100"/>
    </location>
</feature>
<feature type="peptide" id="PRO_0000013142" description="Guanylin">
    <location>
        <begin position="101"/>
        <end position="115"/>
    </location>
</feature>
<feature type="disulfide bond" evidence="1">
    <location>
        <begin position="69"/>
        <end position="82"/>
    </location>
</feature>
<feature type="disulfide bond" evidence="1">
    <location>
        <begin position="104"/>
        <end position="112"/>
    </location>
</feature>
<feature type="disulfide bond" evidence="1">
    <location>
        <begin position="107"/>
        <end position="115"/>
    </location>
</feature>
<protein>
    <recommendedName>
        <fullName>Guanylin</fullName>
    </recommendedName>
    <alternativeName>
        <fullName>Guanylate cyclase activator 2A</fullName>
    </alternativeName>
</protein>
<comment type="function">
    <text>Endogenous activator of intestinal guanylate cyclase. It stimulates this enzyme through the same receptor binding region as the heat-stable enterotoxins.</text>
</comment>
<comment type="subcellular location">
    <subcellularLocation>
        <location>Secreted</location>
    </subcellularLocation>
</comment>
<comment type="tissue specificity">
    <text>Intestine and in low abundance in adrenal gland, kidney, and uterus/oviduct.</text>
</comment>
<comment type="similarity">
    <text evidence="4">Belongs to the guanylin family.</text>
</comment>
<proteinExistence type="evidence at protein level"/>
<accession>P28902</accession>
<keyword id="KW-0903">Direct protein sequencing</keyword>
<keyword id="KW-1015">Disulfide bond</keyword>
<keyword id="KW-1185">Reference proteome</keyword>
<keyword id="KW-0964">Secreted</keyword>
<keyword id="KW-0732">Signal</keyword>
<dbReference type="EMBL" id="M95493">
    <property type="protein sequence ID" value="AAA41302.1"/>
    <property type="molecule type" value="mRNA"/>
</dbReference>
<dbReference type="EMBL" id="M93005">
    <property type="protein sequence ID" value="AAA41300.1"/>
    <property type="molecule type" value="mRNA"/>
</dbReference>
<dbReference type="EMBL" id="X67669">
    <property type="protein sequence ID" value="CAA47901.1"/>
    <property type="molecule type" value="mRNA"/>
</dbReference>
<dbReference type="PIR" id="JN0318">
    <property type="entry name" value="JN0318"/>
</dbReference>
<dbReference type="RefSeq" id="NP_037250.1">
    <property type="nucleotide sequence ID" value="NM_013118.1"/>
</dbReference>
<dbReference type="SMR" id="P28902"/>
<dbReference type="FunCoup" id="P28902">
    <property type="interactions" value="32"/>
</dbReference>
<dbReference type="STRING" id="10116.ENSRNOP00000011867"/>
<dbReference type="PaxDb" id="10116-ENSRNOP00000011867"/>
<dbReference type="Ensembl" id="ENSRNOT00000011867.5">
    <property type="protein sequence ID" value="ENSRNOP00000011867.2"/>
    <property type="gene ID" value="ENSRNOG00000008849.5"/>
</dbReference>
<dbReference type="GeneID" id="25656"/>
<dbReference type="KEGG" id="rno:25656"/>
<dbReference type="AGR" id="RGD:2766"/>
<dbReference type="CTD" id="2980"/>
<dbReference type="RGD" id="2766">
    <property type="gene designation" value="Guca2a"/>
</dbReference>
<dbReference type="eggNOG" id="ENOG502S7QR">
    <property type="taxonomic scope" value="Eukaryota"/>
</dbReference>
<dbReference type="GeneTree" id="ENSGT00940000154436"/>
<dbReference type="HOGENOM" id="CLU_166952_0_0_1"/>
<dbReference type="InParanoid" id="P28902"/>
<dbReference type="OMA" id="CAEPMLP"/>
<dbReference type="OrthoDB" id="9926421at2759"/>
<dbReference type="PhylomeDB" id="P28902"/>
<dbReference type="TreeFam" id="TF330731"/>
<dbReference type="Reactome" id="R-RNO-8935690">
    <property type="pathway name" value="Digestion"/>
</dbReference>
<dbReference type="PRO" id="PR:P28902"/>
<dbReference type="Proteomes" id="UP000002494">
    <property type="component" value="Chromosome 5"/>
</dbReference>
<dbReference type="Bgee" id="ENSRNOG00000008849">
    <property type="expression patterns" value="Expressed in jejunum and 17 other cell types or tissues"/>
</dbReference>
<dbReference type="GO" id="GO:0005576">
    <property type="term" value="C:extracellular region"/>
    <property type="evidence" value="ECO:0007669"/>
    <property type="project" value="UniProtKB-SubCell"/>
</dbReference>
<dbReference type="GO" id="GO:0030250">
    <property type="term" value="F:guanylate cyclase activator activity"/>
    <property type="evidence" value="ECO:0000314"/>
    <property type="project" value="RGD"/>
</dbReference>
<dbReference type="GO" id="GO:0030249">
    <property type="term" value="F:guanylate cyclase regulator activity"/>
    <property type="evidence" value="ECO:0000303"/>
    <property type="project" value="RGD"/>
</dbReference>
<dbReference type="FunFam" id="3.90.1450.10:FF:000002">
    <property type="entry name" value="Guanylate cyclase activator 2A"/>
    <property type="match status" value="1"/>
</dbReference>
<dbReference type="Gene3D" id="3.90.1450.10">
    <property type="entry name" value="Guanylin"/>
    <property type="match status" value="1"/>
</dbReference>
<dbReference type="InterPro" id="IPR000879">
    <property type="entry name" value="Guanylin"/>
</dbReference>
<dbReference type="InterPro" id="IPR036382">
    <property type="entry name" value="Guanylin_sf"/>
</dbReference>
<dbReference type="PANTHER" id="PTHR11318:SF3">
    <property type="entry name" value="GUANYLIN"/>
    <property type="match status" value="1"/>
</dbReference>
<dbReference type="PANTHER" id="PTHR11318">
    <property type="entry name" value="GUANYLIN FAMILY MEMBER"/>
    <property type="match status" value="1"/>
</dbReference>
<dbReference type="Pfam" id="PF02058">
    <property type="entry name" value="Guanylin"/>
    <property type="match status" value="1"/>
</dbReference>
<dbReference type="PIRSF" id="PIRSF001849">
    <property type="entry name" value="Guanylin"/>
    <property type="match status" value="1"/>
</dbReference>
<dbReference type="PRINTS" id="PR00774">
    <property type="entry name" value="GUANYLIN"/>
</dbReference>
<dbReference type="SUPFAM" id="SSF89890">
    <property type="entry name" value="Proguanylin"/>
    <property type="match status" value="1"/>
</dbReference>
<name>GUC2A_RAT</name>
<sequence length="115" mass="12574">MNAWLLSVLCLLGALAVLVEGVTVQDGDLSFPLESVKQLKHLREVQEPTLMSHKKFALRLPKPVAPELCSQSAFPEALRPLCEKPNAEEILQRLEAIAQDPNTCEICAYAACTGC</sequence>